<feature type="chain" id="PRO_1000116553" description="Octanoyltransferase">
    <location>
        <begin position="1"/>
        <end position="258"/>
    </location>
</feature>
<feature type="domain" description="BPL/LPL catalytic" evidence="2">
    <location>
        <begin position="42"/>
        <end position="226"/>
    </location>
</feature>
<feature type="active site" description="Acyl-thioester intermediate" evidence="1">
    <location>
        <position position="187"/>
    </location>
</feature>
<feature type="binding site" evidence="1">
    <location>
        <begin position="80"/>
        <end position="87"/>
    </location>
    <ligand>
        <name>substrate</name>
    </ligand>
</feature>
<feature type="binding site" evidence="1">
    <location>
        <begin position="156"/>
        <end position="158"/>
    </location>
    <ligand>
        <name>substrate</name>
    </ligand>
</feature>
<feature type="binding site" evidence="1">
    <location>
        <begin position="169"/>
        <end position="171"/>
    </location>
    <ligand>
        <name>substrate</name>
    </ligand>
</feature>
<feature type="site" description="Lowers pKa of active site Cys" evidence="1">
    <location>
        <position position="153"/>
    </location>
</feature>
<comment type="function">
    <text evidence="1">Catalyzes the transfer of endogenously produced octanoic acid from octanoyl-acyl-carrier-protein onto the lipoyl domains of lipoate-dependent enzymes. Lipoyl-ACP can also act as a substrate although octanoyl-ACP is likely to be the physiological substrate.</text>
</comment>
<comment type="catalytic activity">
    <reaction evidence="1">
        <text>octanoyl-[ACP] + L-lysyl-[protein] = N(6)-octanoyl-L-lysyl-[protein] + holo-[ACP] + H(+)</text>
        <dbReference type="Rhea" id="RHEA:17665"/>
        <dbReference type="Rhea" id="RHEA-COMP:9636"/>
        <dbReference type="Rhea" id="RHEA-COMP:9685"/>
        <dbReference type="Rhea" id="RHEA-COMP:9752"/>
        <dbReference type="Rhea" id="RHEA-COMP:9928"/>
        <dbReference type="ChEBI" id="CHEBI:15378"/>
        <dbReference type="ChEBI" id="CHEBI:29969"/>
        <dbReference type="ChEBI" id="CHEBI:64479"/>
        <dbReference type="ChEBI" id="CHEBI:78463"/>
        <dbReference type="ChEBI" id="CHEBI:78809"/>
        <dbReference type="EC" id="2.3.1.181"/>
    </reaction>
</comment>
<comment type="pathway">
    <text evidence="1">Protein modification; protein lipoylation via endogenous pathway; protein N(6)-(lipoyl)lysine from octanoyl-[acyl-carrier-protein]: step 1/2.</text>
</comment>
<comment type="subcellular location">
    <subcellularLocation>
        <location evidence="1">Cytoplasm</location>
    </subcellularLocation>
</comment>
<comment type="miscellaneous">
    <text evidence="1">In the reaction, the free carboxyl group of octanoic acid is attached via an amide linkage to the epsilon-amino group of a specific lysine residue of lipoyl domains of lipoate-dependent enzymes.</text>
</comment>
<comment type="similarity">
    <text evidence="1">Belongs to the LipB family.</text>
</comment>
<keyword id="KW-0012">Acyltransferase</keyword>
<keyword id="KW-0963">Cytoplasm</keyword>
<keyword id="KW-0808">Transferase</keyword>
<protein>
    <recommendedName>
        <fullName evidence="1">Octanoyltransferase</fullName>
        <ecNumber evidence="1">2.3.1.181</ecNumber>
    </recommendedName>
    <alternativeName>
        <fullName evidence="1">Lipoate-protein ligase B</fullName>
    </alternativeName>
    <alternativeName>
        <fullName evidence="1">Lipoyl/octanoyl transferase</fullName>
    </alternativeName>
    <alternativeName>
        <fullName evidence="1">Octanoyl-[acyl-carrier-protein]-protein N-octanoyltransferase</fullName>
    </alternativeName>
</protein>
<evidence type="ECO:0000255" key="1">
    <source>
        <dbReference type="HAMAP-Rule" id="MF_00013"/>
    </source>
</evidence>
<evidence type="ECO:0000255" key="2">
    <source>
        <dbReference type="PROSITE-ProRule" id="PRU01067"/>
    </source>
</evidence>
<reference key="1">
    <citation type="submission" date="2009-03" db="EMBL/GenBank/DDBJ databases">
        <title>Comparison of the complete genome sequences of Rhodococcus erythropolis PR4 and Rhodococcus opacus B4.</title>
        <authorList>
            <person name="Takarada H."/>
            <person name="Sekine M."/>
            <person name="Hosoyama A."/>
            <person name="Yamada R."/>
            <person name="Fujisawa T."/>
            <person name="Omata S."/>
            <person name="Shimizu A."/>
            <person name="Tsukatani N."/>
            <person name="Tanikawa S."/>
            <person name="Fujita N."/>
            <person name="Harayama S."/>
        </authorList>
    </citation>
    <scope>NUCLEOTIDE SEQUENCE [LARGE SCALE GENOMIC DNA]</scope>
    <source>
        <strain>B4</strain>
    </source>
</reference>
<name>LIPB_RHOOB</name>
<organism>
    <name type="scientific">Rhodococcus opacus (strain B4)</name>
    <dbReference type="NCBI Taxonomy" id="632772"/>
    <lineage>
        <taxon>Bacteria</taxon>
        <taxon>Bacillati</taxon>
        <taxon>Actinomycetota</taxon>
        <taxon>Actinomycetes</taxon>
        <taxon>Mycobacteriales</taxon>
        <taxon>Nocardiaceae</taxon>
        <taxon>Rhodococcus</taxon>
    </lineage>
</organism>
<dbReference type="EC" id="2.3.1.181" evidence="1"/>
<dbReference type="EMBL" id="AP011115">
    <property type="protein sequence ID" value="BAH49127.1"/>
    <property type="molecule type" value="Genomic_DNA"/>
</dbReference>
<dbReference type="RefSeq" id="WP_012688120.1">
    <property type="nucleotide sequence ID" value="NC_012522.1"/>
</dbReference>
<dbReference type="SMR" id="C1AUB9"/>
<dbReference type="STRING" id="632772.ROP_08800"/>
<dbReference type="KEGG" id="rop:ROP_08800"/>
<dbReference type="PATRIC" id="fig|632772.20.peg.944"/>
<dbReference type="HOGENOM" id="CLU_035168_2_1_11"/>
<dbReference type="OrthoDB" id="9787061at2"/>
<dbReference type="UniPathway" id="UPA00538">
    <property type="reaction ID" value="UER00592"/>
</dbReference>
<dbReference type="Proteomes" id="UP000002212">
    <property type="component" value="Chromosome"/>
</dbReference>
<dbReference type="GO" id="GO:0005737">
    <property type="term" value="C:cytoplasm"/>
    <property type="evidence" value="ECO:0007669"/>
    <property type="project" value="UniProtKB-SubCell"/>
</dbReference>
<dbReference type="GO" id="GO:0033819">
    <property type="term" value="F:lipoyl(octanoyl) transferase activity"/>
    <property type="evidence" value="ECO:0007669"/>
    <property type="project" value="UniProtKB-EC"/>
</dbReference>
<dbReference type="GO" id="GO:0036211">
    <property type="term" value="P:protein modification process"/>
    <property type="evidence" value="ECO:0007669"/>
    <property type="project" value="InterPro"/>
</dbReference>
<dbReference type="CDD" id="cd16444">
    <property type="entry name" value="LipB"/>
    <property type="match status" value="1"/>
</dbReference>
<dbReference type="Gene3D" id="3.30.930.10">
    <property type="entry name" value="Bira Bifunctional Protein, Domain 2"/>
    <property type="match status" value="1"/>
</dbReference>
<dbReference type="HAMAP" id="MF_00013">
    <property type="entry name" value="LipB"/>
    <property type="match status" value="1"/>
</dbReference>
<dbReference type="InterPro" id="IPR045864">
    <property type="entry name" value="aa-tRNA-synth_II/BPL/LPL"/>
</dbReference>
<dbReference type="InterPro" id="IPR004143">
    <property type="entry name" value="BPL_LPL_catalytic"/>
</dbReference>
<dbReference type="InterPro" id="IPR000544">
    <property type="entry name" value="Octanoyltransferase"/>
</dbReference>
<dbReference type="InterPro" id="IPR020605">
    <property type="entry name" value="Octanoyltransferase_CS"/>
</dbReference>
<dbReference type="NCBIfam" id="TIGR00214">
    <property type="entry name" value="lipB"/>
    <property type="match status" value="1"/>
</dbReference>
<dbReference type="NCBIfam" id="NF010925">
    <property type="entry name" value="PRK14345.1"/>
    <property type="match status" value="1"/>
</dbReference>
<dbReference type="PANTHER" id="PTHR10993:SF7">
    <property type="entry name" value="LIPOYLTRANSFERASE 2, MITOCHONDRIAL-RELATED"/>
    <property type="match status" value="1"/>
</dbReference>
<dbReference type="PANTHER" id="PTHR10993">
    <property type="entry name" value="OCTANOYLTRANSFERASE"/>
    <property type="match status" value="1"/>
</dbReference>
<dbReference type="Pfam" id="PF21948">
    <property type="entry name" value="LplA-B_cat"/>
    <property type="match status" value="1"/>
</dbReference>
<dbReference type="PIRSF" id="PIRSF016262">
    <property type="entry name" value="LPLase"/>
    <property type="match status" value="1"/>
</dbReference>
<dbReference type="SUPFAM" id="SSF55681">
    <property type="entry name" value="Class II aaRS and biotin synthetases"/>
    <property type="match status" value="1"/>
</dbReference>
<dbReference type="PROSITE" id="PS51733">
    <property type="entry name" value="BPL_LPL_CATALYTIC"/>
    <property type="match status" value="1"/>
</dbReference>
<dbReference type="PROSITE" id="PS01313">
    <property type="entry name" value="LIPB"/>
    <property type="match status" value="1"/>
</dbReference>
<gene>
    <name evidence="1" type="primary">lipB</name>
    <name type="ordered locus">ROP_08800</name>
</gene>
<accession>C1AUB9</accession>
<sequence length="258" mass="27538">MSSATQSARFSPSPISVEHLGTIGYVDAWDRQRELAAERAENLGADTLLLLEHPAVYTAGRRTEPEDRPTDGTPVIDVDRGGKITWHGPGQLVGYPIVKLAEPVDVVRYVRRLEQALISVCTDLGIDCGRVDGRSGVWLPASLDNGQWLPERKVAAIGVRVQRGVALHGFSLNCNSVLTGFDAIIPCGIRDAGVTSLSRELGRDVTVEEVTPAVTAAVVAALDGALPVTDHDIERVTFDSATAEKTAAAPTFTTVQYG</sequence>
<proteinExistence type="inferred from homology"/>